<feature type="chain" id="PRO_0000110665" description="Orotate phosphoribosyltransferase">
    <location>
        <begin position="1"/>
        <end position="210"/>
    </location>
</feature>
<feature type="binding site" evidence="1">
    <location>
        <position position="94"/>
    </location>
    <ligand>
        <name>5-phospho-alpha-D-ribose 1-diphosphate</name>
        <dbReference type="ChEBI" id="CHEBI:58017"/>
        <note>ligand shared between dimeric partners</note>
    </ligand>
</feature>
<feature type="binding site" evidence="1">
    <location>
        <position position="98"/>
    </location>
    <ligand>
        <name>5-phospho-alpha-D-ribose 1-diphosphate</name>
        <dbReference type="ChEBI" id="CHEBI:58017"/>
        <note>ligand shared between dimeric partners</note>
    </ligand>
</feature>
<feature type="binding site" evidence="1">
    <location>
        <position position="100"/>
    </location>
    <ligand>
        <name>5-phospho-alpha-D-ribose 1-diphosphate</name>
        <dbReference type="ChEBI" id="CHEBI:58017"/>
        <note>ligand shared between dimeric partners</note>
    </ligand>
</feature>
<feature type="binding site" description="in other chain" evidence="1">
    <location>
        <begin position="120"/>
        <end position="128"/>
    </location>
    <ligand>
        <name>5-phospho-alpha-D-ribose 1-diphosphate</name>
        <dbReference type="ChEBI" id="CHEBI:58017"/>
        <note>ligand shared between dimeric partners</note>
    </ligand>
</feature>
<feature type="binding site" evidence="1">
    <location>
        <position position="124"/>
    </location>
    <ligand>
        <name>orotate</name>
        <dbReference type="ChEBI" id="CHEBI:30839"/>
    </ligand>
</feature>
<feature type="helix" evidence="2">
    <location>
        <begin position="1"/>
        <end position="11"/>
    </location>
</feature>
<feature type="strand" evidence="2">
    <location>
        <begin position="14"/>
        <end position="17"/>
    </location>
</feature>
<feature type="strand" evidence="2">
    <location>
        <begin position="30"/>
        <end position="35"/>
    </location>
</feature>
<feature type="helix" evidence="2">
    <location>
        <begin position="37"/>
        <end position="42"/>
    </location>
</feature>
<feature type="helix" evidence="2">
    <location>
        <begin position="44"/>
        <end position="61"/>
    </location>
</feature>
<feature type="strand" evidence="2">
    <location>
        <begin position="67"/>
        <end position="70"/>
    </location>
</feature>
<feature type="turn" evidence="3">
    <location>
        <begin position="72"/>
        <end position="75"/>
    </location>
</feature>
<feature type="helix" evidence="2">
    <location>
        <begin position="76"/>
        <end position="86"/>
    </location>
</feature>
<feature type="strand" evidence="2">
    <location>
        <begin position="90"/>
        <end position="93"/>
    </location>
</feature>
<feature type="strand" evidence="2">
    <location>
        <begin position="106"/>
        <end position="108"/>
    </location>
</feature>
<feature type="strand" evidence="2">
    <location>
        <begin position="115"/>
        <end position="126"/>
    </location>
</feature>
<feature type="helix" evidence="2">
    <location>
        <begin position="127"/>
        <end position="138"/>
    </location>
</feature>
<feature type="strand" evidence="2">
    <location>
        <begin position="142"/>
        <end position="151"/>
    </location>
</feature>
<feature type="helix" evidence="2">
    <location>
        <begin position="155"/>
        <end position="163"/>
    </location>
</feature>
<feature type="strand" evidence="2">
    <location>
        <begin position="168"/>
        <end position="172"/>
    </location>
</feature>
<feature type="helix" evidence="2">
    <location>
        <begin position="174"/>
        <end position="183"/>
    </location>
</feature>
<feature type="helix" evidence="2">
    <location>
        <begin position="189"/>
        <end position="200"/>
    </location>
</feature>
<feature type="strand" evidence="3">
    <location>
        <begin position="202"/>
        <end position="204"/>
    </location>
</feature>
<feature type="helix" evidence="2">
    <location>
        <begin position="205"/>
        <end position="209"/>
    </location>
</feature>
<evidence type="ECO:0000255" key="1">
    <source>
        <dbReference type="HAMAP-Rule" id="MF_01208"/>
    </source>
</evidence>
<evidence type="ECO:0007829" key="2">
    <source>
        <dbReference type="PDB" id="3M3H"/>
    </source>
</evidence>
<evidence type="ECO:0007829" key="3">
    <source>
        <dbReference type="PDB" id="4RV4"/>
    </source>
</evidence>
<name>PYRE_BACAN</name>
<organism>
    <name type="scientific">Bacillus anthracis</name>
    <dbReference type="NCBI Taxonomy" id="1392"/>
    <lineage>
        <taxon>Bacteria</taxon>
        <taxon>Bacillati</taxon>
        <taxon>Bacillota</taxon>
        <taxon>Bacilli</taxon>
        <taxon>Bacillales</taxon>
        <taxon>Bacillaceae</taxon>
        <taxon>Bacillus</taxon>
        <taxon>Bacillus cereus group</taxon>
    </lineage>
</organism>
<reference key="1">
    <citation type="journal article" date="2003" name="Nature">
        <title>The genome sequence of Bacillus anthracis Ames and comparison to closely related bacteria.</title>
        <authorList>
            <person name="Read T.D."/>
            <person name="Peterson S.N."/>
            <person name="Tourasse N.J."/>
            <person name="Baillie L.W."/>
            <person name="Paulsen I.T."/>
            <person name="Nelson K.E."/>
            <person name="Tettelin H."/>
            <person name="Fouts D.E."/>
            <person name="Eisen J.A."/>
            <person name="Gill S.R."/>
            <person name="Holtzapple E.K."/>
            <person name="Okstad O.A."/>
            <person name="Helgason E."/>
            <person name="Rilstone J."/>
            <person name="Wu M."/>
            <person name="Kolonay J.F."/>
            <person name="Beanan M.J."/>
            <person name="Dodson R.J."/>
            <person name="Brinkac L.M."/>
            <person name="Gwinn M.L."/>
            <person name="DeBoy R.T."/>
            <person name="Madpu R."/>
            <person name="Daugherty S.C."/>
            <person name="Durkin A.S."/>
            <person name="Haft D.H."/>
            <person name="Nelson W.C."/>
            <person name="Peterson J.D."/>
            <person name="Pop M."/>
            <person name="Khouri H.M."/>
            <person name="Radune D."/>
            <person name="Benton J.L."/>
            <person name="Mahamoud Y."/>
            <person name="Jiang L."/>
            <person name="Hance I.R."/>
            <person name="Weidman J.F."/>
            <person name="Berry K.J."/>
            <person name="Plaut R.D."/>
            <person name="Wolf A.M."/>
            <person name="Watkins K.L."/>
            <person name="Nierman W.C."/>
            <person name="Hazen A."/>
            <person name="Cline R.T."/>
            <person name="Redmond C."/>
            <person name="Thwaite J.E."/>
            <person name="White O."/>
            <person name="Salzberg S.L."/>
            <person name="Thomason B."/>
            <person name="Friedlander A.M."/>
            <person name="Koehler T.M."/>
            <person name="Hanna P.C."/>
            <person name="Kolstoe A.-B."/>
            <person name="Fraser C.M."/>
        </authorList>
    </citation>
    <scope>NUCLEOTIDE SEQUENCE [LARGE SCALE GENOMIC DNA]</scope>
    <source>
        <strain>Ames / isolate Porton</strain>
    </source>
</reference>
<reference key="2">
    <citation type="journal article" date="2009" name="J. Bacteriol.">
        <title>The complete genome sequence of Bacillus anthracis Ames 'Ancestor'.</title>
        <authorList>
            <person name="Ravel J."/>
            <person name="Jiang L."/>
            <person name="Stanley S.T."/>
            <person name="Wilson M.R."/>
            <person name="Decker R.S."/>
            <person name="Read T.D."/>
            <person name="Worsham P."/>
            <person name="Keim P.S."/>
            <person name="Salzberg S.L."/>
            <person name="Fraser-Liggett C.M."/>
            <person name="Rasko D.A."/>
        </authorList>
    </citation>
    <scope>NUCLEOTIDE SEQUENCE [LARGE SCALE GENOMIC DNA]</scope>
    <source>
        <strain>Ames ancestor</strain>
    </source>
</reference>
<reference key="3">
    <citation type="submission" date="2004-01" db="EMBL/GenBank/DDBJ databases">
        <title>Complete genome sequence of Bacillus anthracis Sterne.</title>
        <authorList>
            <person name="Brettin T.S."/>
            <person name="Bruce D."/>
            <person name="Challacombe J.F."/>
            <person name="Gilna P."/>
            <person name="Han C."/>
            <person name="Hill K."/>
            <person name="Hitchcock P."/>
            <person name="Jackson P."/>
            <person name="Keim P."/>
            <person name="Longmire J."/>
            <person name="Lucas S."/>
            <person name="Okinaka R."/>
            <person name="Richardson P."/>
            <person name="Rubin E."/>
            <person name="Tice H."/>
        </authorList>
    </citation>
    <scope>NUCLEOTIDE SEQUENCE [LARGE SCALE GENOMIC DNA]</scope>
    <source>
        <strain>Sterne</strain>
    </source>
</reference>
<dbReference type="EC" id="2.4.2.10" evidence="1"/>
<dbReference type="EMBL" id="AE016879">
    <property type="protein sequence ID" value="AAP27748.1"/>
    <property type="molecule type" value="Genomic_DNA"/>
</dbReference>
<dbReference type="EMBL" id="AE017334">
    <property type="protein sequence ID" value="AAT33138.1"/>
    <property type="molecule type" value="Genomic_DNA"/>
</dbReference>
<dbReference type="EMBL" id="AE017225">
    <property type="protein sequence ID" value="AAT56035.1"/>
    <property type="molecule type" value="Genomic_DNA"/>
</dbReference>
<dbReference type="RefSeq" id="NP_846262.1">
    <property type="nucleotide sequence ID" value="NC_003997.3"/>
</dbReference>
<dbReference type="RefSeq" id="WP_000711466.1">
    <property type="nucleotide sequence ID" value="NZ_WXXJ01000026.1"/>
</dbReference>
<dbReference type="RefSeq" id="YP_029984.1">
    <property type="nucleotide sequence ID" value="NC_005945.1"/>
</dbReference>
<dbReference type="PDB" id="3M3H">
    <property type="method" value="X-ray"/>
    <property type="resolution" value="1.75 A"/>
    <property type="chains" value="A=1-210"/>
</dbReference>
<dbReference type="PDB" id="4RV4">
    <property type="method" value="X-ray"/>
    <property type="resolution" value="2.65 A"/>
    <property type="chains" value="A/B/C=1-210"/>
</dbReference>
<dbReference type="PDBsum" id="3M3H"/>
<dbReference type="PDBsum" id="4RV4"/>
<dbReference type="SMR" id="Q81WF6"/>
<dbReference type="STRING" id="261594.GBAA_4021"/>
<dbReference type="DNASU" id="1086652"/>
<dbReference type="GeneID" id="45023711"/>
<dbReference type="KEGG" id="ban:BA_4021"/>
<dbReference type="KEGG" id="bar:GBAA_4021"/>
<dbReference type="KEGG" id="bat:BAS3733"/>
<dbReference type="PATRIC" id="fig|198094.11.peg.3992"/>
<dbReference type="eggNOG" id="COG0461">
    <property type="taxonomic scope" value="Bacteria"/>
</dbReference>
<dbReference type="HOGENOM" id="CLU_074878_1_1_9"/>
<dbReference type="OMA" id="ENPFTWA"/>
<dbReference type="OrthoDB" id="9802134at2"/>
<dbReference type="UniPathway" id="UPA00070">
    <property type="reaction ID" value="UER00119"/>
</dbReference>
<dbReference type="EvolutionaryTrace" id="Q81WF6"/>
<dbReference type="Proteomes" id="UP000000427">
    <property type="component" value="Chromosome"/>
</dbReference>
<dbReference type="Proteomes" id="UP000000594">
    <property type="component" value="Chromosome"/>
</dbReference>
<dbReference type="GO" id="GO:0000287">
    <property type="term" value="F:magnesium ion binding"/>
    <property type="evidence" value="ECO:0007669"/>
    <property type="project" value="UniProtKB-UniRule"/>
</dbReference>
<dbReference type="GO" id="GO:0004588">
    <property type="term" value="F:orotate phosphoribosyltransferase activity"/>
    <property type="evidence" value="ECO:0007669"/>
    <property type="project" value="UniProtKB-UniRule"/>
</dbReference>
<dbReference type="GO" id="GO:0044205">
    <property type="term" value="P:'de novo' UMP biosynthetic process"/>
    <property type="evidence" value="ECO:0007669"/>
    <property type="project" value="UniProtKB-UniRule"/>
</dbReference>
<dbReference type="GO" id="GO:0019856">
    <property type="term" value="P:pyrimidine nucleobase biosynthetic process"/>
    <property type="evidence" value="ECO:0007669"/>
    <property type="project" value="TreeGrafter"/>
</dbReference>
<dbReference type="CDD" id="cd06223">
    <property type="entry name" value="PRTases_typeI"/>
    <property type="match status" value="1"/>
</dbReference>
<dbReference type="Gene3D" id="3.40.50.2020">
    <property type="match status" value="1"/>
</dbReference>
<dbReference type="HAMAP" id="MF_01208">
    <property type="entry name" value="PyrE"/>
    <property type="match status" value="1"/>
</dbReference>
<dbReference type="InterPro" id="IPR023031">
    <property type="entry name" value="OPRT"/>
</dbReference>
<dbReference type="InterPro" id="IPR004467">
    <property type="entry name" value="Or_phspho_trans_dom"/>
</dbReference>
<dbReference type="InterPro" id="IPR000836">
    <property type="entry name" value="PRibTrfase_dom"/>
</dbReference>
<dbReference type="InterPro" id="IPR029057">
    <property type="entry name" value="PRTase-like"/>
</dbReference>
<dbReference type="NCBIfam" id="TIGR00336">
    <property type="entry name" value="pyrE"/>
    <property type="match status" value="1"/>
</dbReference>
<dbReference type="PANTHER" id="PTHR19278">
    <property type="entry name" value="OROTATE PHOSPHORIBOSYLTRANSFERASE"/>
    <property type="match status" value="1"/>
</dbReference>
<dbReference type="PANTHER" id="PTHR19278:SF9">
    <property type="entry name" value="URIDINE 5'-MONOPHOSPHATE SYNTHASE"/>
    <property type="match status" value="1"/>
</dbReference>
<dbReference type="Pfam" id="PF00156">
    <property type="entry name" value="Pribosyltran"/>
    <property type="match status" value="1"/>
</dbReference>
<dbReference type="SUPFAM" id="SSF53271">
    <property type="entry name" value="PRTase-like"/>
    <property type="match status" value="1"/>
</dbReference>
<dbReference type="PROSITE" id="PS00103">
    <property type="entry name" value="PUR_PYR_PR_TRANSFER"/>
    <property type="match status" value="1"/>
</dbReference>
<gene>
    <name evidence="1" type="primary">pyrE</name>
    <name type="ordered locus">BA_4021</name>
    <name type="ordered locus">GBAA_4021</name>
    <name type="ordered locus">BAS3733</name>
</gene>
<protein>
    <recommendedName>
        <fullName evidence="1">Orotate phosphoribosyltransferase</fullName>
        <shortName evidence="1">OPRT</shortName>
        <shortName evidence="1">OPRTase</shortName>
        <ecNumber evidence="1">2.4.2.10</ecNumber>
    </recommendedName>
</protein>
<accession>Q81WF6</accession>
<accession>Q6HUK4</accession>
<accession>Q6KNT9</accession>
<sequence length="210" mass="22714">MKKEIASHLLEIGAVFLQPNDPFTWSSGMKSPIYCDNRLTLSYPKVRQTIAAGLEELIKEHFPTVEVIAGTATAGIAHAAWVSDRMDLPMCYVRSKAKGHGKGNQIEGKAEKGQKVVVVEDLISTGGSAITCVEALREAGCEVLGIVSIFTYELEAGKEKLEAANVASYSLSDYSALTEVAAEKGIIGQAETKKLQEWRKNPADEAWITA</sequence>
<proteinExistence type="evidence at protein level"/>
<keyword id="KW-0002">3D-structure</keyword>
<keyword id="KW-0328">Glycosyltransferase</keyword>
<keyword id="KW-0460">Magnesium</keyword>
<keyword id="KW-0665">Pyrimidine biosynthesis</keyword>
<keyword id="KW-1185">Reference proteome</keyword>
<keyword id="KW-0808">Transferase</keyword>
<comment type="function">
    <text evidence="1">Catalyzes the transfer of a ribosyl phosphate group from 5-phosphoribose 1-diphosphate to orotate, leading to the formation of orotidine monophosphate (OMP).</text>
</comment>
<comment type="catalytic activity">
    <reaction evidence="1">
        <text>orotidine 5'-phosphate + diphosphate = orotate + 5-phospho-alpha-D-ribose 1-diphosphate</text>
        <dbReference type="Rhea" id="RHEA:10380"/>
        <dbReference type="ChEBI" id="CHEBI:30839"/>
        <dbReference type="ChEBI" id="CHEBI:33019"/>
        <dbReference type="ChEBI" id="CHEBI:57538"/>
        <dbReference type="ChEBI" id="CHEBI:58017"/>
        <dbReference type="EC" id="2.4.2.10"/>
    </reaction>
</comment>
<comment type="cofactor">
    <cofactor evidence="1">
        <name>Mg(2+)</name>
        <dbReference type="ChEBI" id="CHEBI:18420"/>
    </cofactor>
</comment>
<comment type="pathway">
    <text evidence="1">Pyrimidine metabolism; UMP biosynthesis via de novo pathway; UMP from orotate: step 1/2.</text>
</comment>
<comment type="subunit">
    <text evidence="1">Homodimer.</text>
</comment>
<comment type="similarity">
    <text evidence="1">Belongs to the purine/pyrimidine phosphoribosyltransferase family. PyrE subfamily.</text>
</comment>